<comment type="function">
    <text evidence="1">Involved in rRNA processing.</text>
</comment>
<comment type="subcellular location">
    <subcellularLocation>
        <location evidence="1">Nucleus</location>
        <location evidence="1">Nucleolus</location>
    </subcellularLocation>
</comment>
<comment type="similarity">
    <text evidence="4">Belongs to the EFG1 family.</text>
</comment>
<keyword id="KW-0175">Coiled coil</keyword>
<keyword id="KW-0539">Nucleus</keyword>
<keyword id="KW-0698">rRNA processing</keyword>
<evidence type="ECO:0000250" key="1"/>
<evidence type="ECO:0000255" key="2"/>
<evidence type="ECO:0000256" key="3">
    <source>
        <dbReference type="SAM" id="MobiDB-lite"/>
    </source>
</evidence>
<evidence type="ECO:0000305" key="4"/>
<name>EFG1P_PHANO</name>
<protein>
    <recommendedName>
        <fullName>rRNA-processing protein EFG1</fullName>
    </recommendedName>
</protein>
<gene>
    <name type="primary">EFG1</name>
    <name type="ORF">SNOG_11751</name>
</gene>
<proteinExistence type="inferred from homology"/>
<feature type="chain" id="PRO_0000330278" description="rRNA-processing protein EFG1">
    <location>
        <begin position="1"/>
        <end position="288"/>
    </location>
</feature>
<feature type="region of interest" description="Disordered" evidence="3">
    <location>
        <begin position="1"/>
        <end position="58"/>
    </location>
</feature>
<feature type="region of interest" description="Disordered" evidence="3">
    <location>
        <begin position="178"/>
        <end position="288"/>
    </location>
</feature>
<feature type="coiled-coil region" evidence="2">
    <location>
        <begin position="83"/>
        <end position="154"/>
    </location>
</feature>
<feature type="compositionally biased region" description="Basic and acidic residues" evidence="3">
    <location>
        <begin position="1"/>
        <end position="10"/>
    </location>
</feature>
<feature type="compositionally biased region" description="Basic and acidic residues" evidence="3">
    <location>
        <begin position="198"/>
        <end position="210"/>
    </location>
</feature>
<feature type="compositionally biased region" description="Basic and acidic residues" evidence="3">
    <location>
        <begin position="251"/>
        <end position="265"/>
    </location>
</feature>
<feature type="compositionally biased region" description="Polar residues" evidence="3">
    <location>
        <begin position="266"/>
        <end position="275"/>
    </location>
</feature>
<feature type="compositionally biased region" description="Acidic residues" evidence="3">
    <location>
        <begin position="277"/>
        <end position="288"/>
    </location>
</feature>
<reference key="1">
    <citation type="journal article" date="2007" name="Plant Cell">
        <title>Dothideomycete-plant interactions illuminated by genome sequencing and EST analysis of the wheat pathogen Stagonospora nodorum.</title>
        <authorList>
            <person name="Hane J.K."/>
            <person name="Lowe R.G.T."/>
            <person name="Solomon P.S."/>
            <person name="Tan K.-C."/>
            <person name="Schoch C.L."/>
            <person name="Spatafora J.W."/>
            <person name="Crous P.W."/>
            <person name="Kodira C.D."/>
            <person name="Birren B.W."/>
            <person name="Galagan J.E."/>
            <person name="Torriani S.F.F."/>
            <person name="McDonald B.A."/>
            <person name="Oliver R.P."/>
        </authorList>
    </citation>
    <scope>NUCLEOTIDE SEQUENCE [LARGE SCALE GENOMIC DNA]</scope>
    <source>
        <strain>SN15 / ATCC MYA-4574 / FGSC 10173</strain>
    </source>
</reference>
<organism>
    <name type="scientific">Phaeosphaeria nodorum (strain SN15 / ATCC MYA-4574 / FGSC 10173)</name>
    <name type="common">Glume blotch fungus</name>
    <name type="synonym">Parastagonospora nodorum</name>
    <dbReference type="NCBI Taxonomy" id="321614"/>
    <lineage>
        <taxon>Eukaryota</taxon>
        <taxon>Fungi</taxon>
        <taxon>Dikarya</taxon>
        <taxon>Ascomycota</taxon>
        <taxon>Pezizomycotina</taxon>
        <taxon>Dothideomycetes</taxon>
        <taxon>Pleosporomycetidae</taxon>
        <taxon>Pleosporales</taxon>
        <taxon>Pleosporineae</taxon>
        <taxon>Phaeosphaeriaceae</taxon>
        <taxon>Parastagonospora</taxon>
    </lineage>
</organism>
<sequence>MSQKRKHDDTPGDASSASKTFKKHRPFKPGQNHQQTKHHRRPNLSHDDENGRSTNALKSRIRDLKRFLTHMDSVEKHKMSAGARQERERELEACEHELAEKLNASREAEYRKKMIGKYHQVRFFDRQKGTRILKRLKKELSALEDDSKKTALQQRIHNAEVDVNYAIYYPLMKPYSSLYPKSKNKKSSDSEEAEDTGEDSKNSAEVDGPKGDVNMWKAIEEAMQDGTLEKLRYSKDAVPAEPPKKSKKPKAKDSKKEKSVSKTSHDASASHNYAVQDQDEDSDGGFFE</sequence>
<accession>Q0U913</accession>
<dbReference type="EMBL" id="CH445344">
    <property type="protein sequence ID" value="EAT80795.1"/>
    <property type="molecule type" value="Genomic_DNA"/>
</dbReference>
<dbReference type="RefSeq" id="XP_001801989.1">
    <property type="nucleotide sequence ID" value="XM_001801937.1"/>
</dbReference>
<dbReference type="SMR" id="Q0U913"/>
<dbReference type="FunCoup" id="Q0U913">
    <property type="interactions" value="144"/>
</dbReference>
<dbReference type="STRING" id="321614.Q0U913"/>
<dbReference type="EnsemblFungi" id="SNOT_11751">
    <property type="protein sequence ID" value="SNOT_11751"/>
    <property type="gene ID" value="SNOG_11751"/>
</dbReference>
<dbReference type="GeneID" id="5978897"/>
<dbReference type="KEGG" id="pno:SNOG_11751"/>
<dbReference type="VEuPathDB" id="FungiDB:JI435_117510"/>
<dbReference type="eggNOG" id="KOG4484">
    <property type="taxonomic scope" value="Eukaryota"/>
</dbReference>
<dbReference type="HOGENOM" id="CLU_066912_0_0_1"/>
<dbReference type="InParanoid" id="Q0U913"/>
<dbReference type="OMA" id="KCMEEGT"/>
<dbReference type="OrthoDB" id="47732at2759"/>
<dbReference type="Proteomes" id="UP000001055">
    <property type="component" value="Unassembled WGS sequence"/>
</dbReference>
<dbReference type="GO" id="GO:0005730">
    <property type="term" value="C:nucleolus"/>
    <property type="evidence" value="ECO:0007669"/>
    <property type="project" value="UniProtKB-SubCell"/>
</dbReference>
<dbReference type="GO" id="GO:0000462">
    <property type="term" value="P:maturation of SSU-rRNA from tricistronic rRNA transcript (SSU-rRNA, 5.8S rRNA, LSU-rRNA)"/>
    <property type="evidence" value="ECO:0000318"/>
    <property type="project" value="GO_Central"/>
</dbReference>
<dbReference type="InterPro" id="IPR019310">
    <property type="entry name" value="Efg1"/>
</dbReference>
<dbReference type="InterPro" id="IPR050786">
    <property type="entry name" value="EFG1_rRNA-proc"/>
</dbReference>
<dbReference type="PANTHER" id="PTHR33911">
    <property type="entry name" value="RRNA-PROCESSING PROTEIN EFG1"/>
    <property type="match status" value="1"/>
</dbReference>
<dbReference type="PANTHER" id="PTHR33911:SF1">
    <property type="entry name" value="RRNA-PROCESSING PROTEIN EFG1"/>
    <property type="match status" value="1"/>
</dbReference>
<dbReference type="Pfam" id="PF10153">
    <property type="entry name" value="Efg1"/>
    <property type="match status" value="1"/>
</dbReference>